<dbReference type="EC" id="7.1.2.2" evidence="1"/>
<dbReference type="EMBL" id="AE014613">
    <property type="protein sequence ID" value="AAO71149.1"/>
    <property type="molecule type" value="Genomic_DNA"/>
</dbReference>
<dbReference type="EMBL" id="AL513382">
    <property type="protein sequence ID" value="CAD03128.1"/>
    <property type="molecule type" value="Genomic_DNA"/>
</dbReference>
<dbReference type="RefSeq" id="NP_458076.1">
    <property type="nucleotide sequence ID" value="NC_003198.1"/>
</dbReference>
<dbReference type="RefSeq" id="WP_001176751.1">
    <property type="nucleotide sequence ID" value="NZ_WSUR01000023.1"/>
</dbReference>
<dbReference type="SMR" id="Q8XG95"/>
<dbReference type="STRING" id="220341.gene:17587771"/>
<dbReference type="GeneID" id="66758156"/>
<dbReference type="KEGG" id="stt:t3652"/>
<dbReference type="KEGG" id="sty:STY3911"/>
<dbReference type="PATRIC" id="fig|220341.7.peg.3991"/>
<dbReference type="eggNOG" id="COG0056">
    <property type="taxonomic scope" value="Bacteria"/>
</dbReference>
<dbReference type="HOGENOM" id="CLU_010091_2_1_6"/>
<dbReference type="OMA" id="INQRDNW"/>
<dbReference type="OrthoDB" id="9803053at2"/>
<dbReference type="Proteomes" id="UP000000541">
    <property type="component" value="Chromosome"/>
</dbReference>
<dbReference type="Proteomes" id="UP000002670">
    <property type="component" value="Chromosome"/>
</dbReference>
<dbReference type="GO" id="GO:0005886">
    <property type="term" value="C:plasma membrane"/>
    <property type="evidence" value="ECO:0007669"/>
    <property type="project" value="UniProtKB-SubCell"/>
</dbReference>
<dbReference type="GO" id="GO:0045259">
    <property type="term" value="C:proton-transporting ATP synthase complex"/>
    <property type="evidence" value="ECO:0007669"/>
    <property type="project" value="UniProtKB-KW"/>
</dbReference>
<dbReference type="GO" id="GO:0043531">
    <property type="term" value="F:ADP binding"/>
    <property type="evidence" value="ECO:0007669"/>
    <property type="project" value="TreeGrafter"/>
</dbReference>
<dbReference type="GO" id="GO:0005524">
    <property type="term" value="F:ATP binding"/>
    <property type="evidence" value="ECO:0007669"/>
    <property type="project" value="UniProtKB-UniRule"/>
</dbReference>
<dbReference type="GO" id="GO:0046933">
    <property type="term" value="F:proton-transporting ATP synthase activity, rotational mechanism"/>
    <property type="evidence" value="ECO:0007669"/>
    <property type="project" value="UniProtKB-UniRule"/>
</dbReference>
<dbReference type="CDD" id="cd18113">
    <property type="entry name" value="ATP-synt_F1_alpha_C"/>
    <property type="match status" value="1"/>
</dbReference>
<dbReference type="CDD" id="cd18116">
    <property type="entry name" value="ATP-synt_F1_alpha_N"/>
    <property type="match status" value="1"/>
</dbReference>
<dbReference type="CDD" id="cd01132">
    <property type="entry name" value="F1-ATPase_alpha_CD"/>
    <property type="match status" value="1"/>
</dbReference>
<dbReference type="FunFam" id="1.20.150.20:FF:000001">
    <property type="entry name" value="ATP synthase subunit alpha"/>
    <property type="match status" value="1"/>
</dbReference>
<dbReference type="FunFam" id="2.40.30.20:FF:000001">
    <property type="entry name" value="ATP synthase subunit alpha"/>
    <property type="match status" value="1"/>
</dbReference>
<dbReference type="FunFam" id="3.40.50.300:FF:000002">
    <property type="entry name" value="ATP synthase subunit alpha"/>
    <property type="match status" value="1"/>
</dbReference>
<dbReference type="Gene3D" id="2.40.30.20">
    <property type="match status" value="1"/>
</dbReference>
<dbReference type="Gene3D" id="1.20.150.20">
    <property type="entry name" value="ATP synthase alpha/beta chain, C-terminal domain"/>
    <property type="match status" value="1"/>
</dbReference>
<dbReference type="Gene3D" id="3.40.50.300">
    <property type="entry name" value="P-loop containing nucleotide triphosphate hydrolases"/>
    <property type="match status" value="1"/>
</dbReference>
<dbReference type="HAMAP" id="MF_01346">
    <property type="entry name" value="ATP_synth_alpha_bact"/>
    <property type="match status" value="1"/>
</dbReference>
<dbReference type="InterPro" id="IPR023366">
    <property type="entry name" value="ATP_synth_asu-like_sf"/>
</dbReference>
<dbReference type="InterPro" id="IPR000793">
    <property type="entry name" value="ATP_synth_asu_C"/>
</dbReference>
<dbReference type="InterPro" id="IPR038376">
    <property type="entry name" value="ATP_synth_asu_C_sf"/>
</dbReference>
<dbReference type="InterPro" id="IPR033732">
    <property type="entry name" value="ATP_synth_F1_a_nt-bd_dom"/>
</dbReference>
<dbReference type="InterPro" id="IPR005294">
    <property type="entry name" value="ATP_synth_F1_asu"/>
</dbReference>
<dbReference type="InterPro" id="IPR020003">
    <property type="entry name" value="ATPase_a/bsu_AS"/>
</dbReference>
<dbReference type="InterPro" id="IPR004100">
    <property type="entry name" value="ATPase_F1/V1/A1_a/bsu_N"/>
</dbReference>
<dbReference type="InterPro" id="IPR036121">
    <property type="entry name" value="ATPase_F1/V1/A1_a/bsu_N_sf"/>
</dbReference>
<dbReference type="InterPro" id="IPR000194">
    <property type="entry name" value="ATPase_F1/V1/A1_a/bsu_nucl-bd"/>
</dbReference>
<dbReference type="InterPro" id="IPR027417">
    <property type="entry name" value="P-loop_NTPase"/>
</dbReference>
<dbReference type="NCBIfam" id="TIGR00962">
    <property type="entry name" value="atpA"/>
    <property type="match status" value="1"/>
</dbReference>
<dbReference type="NCBIfam" id="NF009884">
    <property type="entry name" value="PRK13343.1"/>
    <property type="match status" value="1"/>
</dbReference>
<dbReference type="PANTHER" id="PTHR48082">
    <property type="entry name" value="ATP SYNTHASE SUBUNIT ALPHA, MITOCHONDRIAL"/>
    <property type="match status" value="1"/>
</dbReference>
<dbReference type="PANTHER" id="PTHR48082:SF2">
    <property type="entry name" value="ATP SYNTHASE SUBUNIT ALPHA, MITOCHONDRIAL"/>
    <property type="match status" value="1"/>
</dbReference>
<dbReference type="Pfam" id="PF00006">
    <property type="entry name" value="ATP-synt_ab"/>
    <property type="match status" value="1"/>
</dbReference>
<dbReference type="Pfam" id="PF00306">
    <property type="entry name" value="ATP-synt_ab_C"/>
    <property type="match status" value="1"/>
</dbReference>
<dbReference type="Pfam" id="PF02874">
    <property type="entry name" value="ATP-synt_ab_N"/>
    <property type="match status" value="1"/>
</dbReference>
<dbReference type="SUPFAM" id="SSF47917">
    <property type="entry name" value="C-terminal domain of alpha and beta subunits of F1 ATP synthase"/>
    <property type="match status" value="1"/>
</dbReference>
<dbReference type="SUPFAM" id="SSF50615">
    <property type="entry name" value="N-terminal domain of alpha and beta subunits of F1 ATP synthase"/>
    <property type="match status" value="1"/>
</dbReference>
<dbReference type="SUPFAM" id="SSF52540">
    <property type="entry name" value="P-loop containing nucleoside triphosphate hydrolases"/>
    <property type="match status" value="1"/>
</dbReference>
<dbReference type="PROSITE" id="PS00152">
    <property type="entry name" value="ATPASE_ALPHA_BETA"/>
    <property type="match status" value="1"/>
</dbReference>
<comment type="function">
    <text evidence="1">Produces ATP from ADP in the presence of a proton gradient across the membrane. The alpha chain is a regulatory subunit.</text>
</comment>
<comment type="catalytic activity">
    <reaction evidence="1">
        <text>ATP + H2O + 4 H(+)(in) = ADP + phosphate + 5 H(+)(out)</text>
        <dbReference type="Rhea" id="RHEA:57720"/>
        <dbReference type="ChEBI" id="CHEBI:15377"/>
        <dbReference type="ChEBI" id="CHEBI:15378"/>
        <dbReference type="ChEBI" id="CHEBI:30616"/>
        <dbReference type="ChEBI" id="CHEBI:43474"/>
        <dbReference type="ChEBI" id="CHEBI:456216"/>
        <dbReference type="EC" id="7.1.2.2"/>
    </reaction>
</comment>
<comment type="subunit">
    <text evidence="1">F-type ATPases have 2 components, CF(1) - the catalytic core - and CF(0) - the membrane proton channel. CF(1) has five subunits: alpha(3), beta(3), gamma(1), delta(1), epsilon(1). CF(0) has three main subunits: a(1), b(2) and c(9-12). The alpha and beta chains form an alternating ring which encloses part of the gamma chain. CF(1) is attached to CF(0) by a central stalk formed by the gamma and epsilon chains, while a peripheral stalk is formed by the delta and b chains.</text>
</comment>
<comment type="subcellular location">
    <subcellularLocation>
        <location evidence="1">Cell inner membrane</location>
        <topology evidence="1">Peripheral membrane protein</topology>
    </subcellularLocation>
</comment>
<comment type="similarity">
    <text evidence="1">Belongs to the ATPase alpha/beta chains family.</text>
</comment>
<organism>
    <name type="scientific">Salmonella typhi</name>
    <dbReference type="NCBI Taxonomy" id="90370"/>
    <lineage>
        <taxon>Bacteria</taxon>
        <taxon>Pseudomonadati</taxon>
        <taxon>Pseudomonadota</taxon>
        <taxon>Gammaproteobacteria</taxon>
        <taxon>Enterobacterales</taxon>
        <taxon>Enterobacteriaceae</taxon>
        <taxon>Salmonella</taxon>
    </lineage>
</organism>
<name>ATPA_SALTI</name>
<reference key="1">
    <citation type="journal article" date="2003" name="J. Bacteriol.">
        <title>Comparative genomics of Salmonella enterica serovar Typhi strains Ty2 and CT18.</title>
        <authorList>
            <person name="Deng W."/>
            <person name="Liou S.-R."/>
            <person name="Plunkett G. III"/>
            <person name="Mayhew G.F."/>
            <person name="Rose D.J."/>
            <person name="Burland V."/>
            <person name="Kodoyianni V."/>
            <person name="Schwartz D.C."/>
            <person name="Blattner F.R."/>
        </authorList>
    </citation>
    <scope>NUCLEOTIDE SEQUENCE [LARGE SCALE GENOMIC DNA]</scope>
    <source>
        <strain>ATCC 700931 / Ty2</strain>
    </source>
</reference>
<reference key="2">
    <citation type="journal article" date="2001" name="Nature">
        <title>Complete genome sequence of a multiple drug resistant Salmonella enterica serovar Typhi CT18.</title>
        <authorList>
            <person name="Parkhill J."/>
            <person name="Dougan G."/>
            <person name="James K.D."/>
            <person name="Thomson N.R."/>
            <person name="Pickard D."/>
            <person name="Wain J."/>
            <person name="Churcher C.M."/>
            <person name="Mungall K.L."/>
            <person name="Bentley S.D."/>
            <person name="Holden M.T.G."/>
            <person name="Sebaihia M."/>
            <person name="Baker S."/>
            <person name="Basham D."/>
            <person name="Brooks K."/>
            <person name="Chillingworth T."/>
            <person name="Connerton P."/>
            <person name="Cronin A."/>
            <person name="Davis P."/>
            <person name="Davies R.M."/>
            <person name="Dowd L."/>
            <person name="White N."/>
            <person name="Farrar J."/>
            <person name="Feltwell T."/>
            <person name="Hamlin N."/>
            <person name="Haque A."/>
            <person name="Hien T.T."/>
            <person name="Holroyd S."/>
            <person name="Jagels K."/>
            <person name="Krogh A."/>
            <person name="Larsen T.S."/>
            <person name="Leather S."/>
            <person name="Moule S."/>
            <person name="O'Gaora P."/>
            <person name="Parry C."/>
            <person name="Quail M.A."/>
            <person name="Rutherford K.M."/>
            <person name="Simmonds M."/>
            <person name="Skelton J."/>
            <person name="Stevens K."/>
            <person name="Whitehead S."/>
            <person name="Barrell B.G."/>
        </authorList>
    </citation>
    <scope>NUCLEOTIDE SEQUENCE [LARGE SCALE GENOMIC DNA]</scope>
    <source>
        <strain>CT18</strain>
    </source>
</reference>
<sequence length="513" mass="55113">MQLNSTEISELIKQRIAQFNVVSEAHNEGTIVSVSDGVIRIHGLADCMQGEMISLPGNRYAIALNLERDSVGAVVMGPYADLAEGMKVKCTGRILEVPVGRGLLGRVVNTLGAPIDGKGPVDNDGFSAVEAIAPGVIDRQSVDQPVQTGYKAVDSMIPIGRGQRELIIGDRQTGKTALAIDAIINQRDSGIKCIYVAIGQKASTISNVVRKLEEHGALANTIVVVATASESAALQYLAPYAGCAMGEYFRDRGEDALIIYDDLSKQAVAYRQISLLLRRPPGREAFPGDVFYLHSRLLERAARVNADYVEAFTKGEVKGKTGSLTALPIIETQAGDVSAFVPTNVISITDGQIFLESNLFNAGIRPAVNPGISVSRVGGAAQTKIMKKLSGGIRTALAQYRELAAFSQFASDLDDATRKQLDHGQKVTELLKQKQYAPMSVAQQSLVLFAAERGYLADVELAKIGSFEAALLAYVDRDHAPLMQEINQSGGYNDEIEGKLKGILDSFKATQSW</sequence>
<accession>Q8XG95</accession>
<accession>Q7AM14</accession>
<evidence type="ECO:0000255" key="1">
    <source>
        <dbReference type="HAMAP-Rule" id="MF_01346"/>
    </source>
</evidence>
<gene>
    <name evidence="1" type="primary">atpA</name>
    <name type="ordered locus">STY3911</name>
    <name type="ordered locus">t3652</name>
</gene>
<proteinExistence type="inferred from homology"/>
<feature type="chain" id="PRO_0000238349" description="ATP synthase subunit alpha">
    <location>
        <begin position="1"/>
        <end position="513"/>
    </location>
</feature>
<feature type="binding site" evidence="1">
    <location>
        <begin position="169"/>
        <end position="176"/>
    </location>
    <ligand>
        <name>ATP</name>
        <dbReference type="ChEBI" id="CHEBI:30616"/>
    </ligand>
</feature>
<feature type="site" description="Required for activity" evidence="1">
    <location>
        <position position="373"/>
    </location>
</feature>
<protein>
    <recommendedName>
        <fullName evidence="1">ATP synthase subunit alpha</fullName>
        <ecNumber evidence="1">7.1.2.2</ecNumber>
    </recommendedName>
    <alternativeName>
        <fullName evidence="1">ATP synthase F1 sector subunit alpha</fullName>
    </alternativeName>
    <alternativeName>
        <fullName evidence="1">F-ATPase subunit alpha</fullName>
    </alternativeName>
</protein>
<keyword id="KW-0066">ATP synthesis</keyword>
<keyword id="KW-0067">ATP-binding</keyword>
<keyword id="KW-0997">Cell inner membrane</keyword>
<keyword id="KW-1003">Cell membrane</keyword>
<keyword id="KW-0139">CF(1)</keyword>
<keyword id="KW-0375">Hydrogen ion transport</keyword>
<keyword id="KW-0406">Ion transport</keyword>
<keyword id="KW-0472">Membrane</keyword>
<keyword id="KW-0547">Nucleotide-binding</keyword>
<keyword id="KW-1278">Translocase</keyword>
<keyword id="KW-0813">Transport</keyword>